<feature type="chain" id="PRO_1000018674" description="Phosphoribosylaminoimidazole-succinocarboxamide synthase">
    <location>
        <begin position="1"/>
        <end position="250"/>
    </location>
</feature>
<gene>
    <name evidence="1" type="primary">purC</name>
    <name type="ordered locus">BAD_0524</name>
</gene>
<dbReference type="EC" id="6.3.2.6" evidence="1"/>
<dbReference type="EMBL" id="AP009256">
    <property type="protein sequence ID" value="BAF39305.1"/>
    <property type="molecule type" value="Genomic_DNA"/>
</dbReference>
<dbReference type="RefSeq" id="WP_011742972.1">
    <property type="nucleotide sequence ID" value="NC_008618.1"/>
</dbReference>
<dbReference type="SMR" id="A1A0S2"/>
<dbReference type="STRING" id="367928.BAD_0524"/>
<dbReference type="PaxDb" id="1680-BADO_0537"/>
<dbReference type="GeneID" id="4556693"/>
<dbReference type="KEGG" id="bad:BAD_0524"/>
<dbReference type="HOGENOM" id="CLU_061495_2_0_11"/>
<dbReference type="UniPathway" id="UPA00074">
    <property type="reaction ID" value="UER00131"/>
</dbReference>
<dbReference type="Proteomes" id="UP000008702">
    <property type="component" value="Chromosome"/>
</dbReference>
<dbReference type="GO" id="GO:0005524">
    <property type="term" value="F:ATP binding"/>
    <property type="evidence" value="ECO:0007669"/>
    <property type="project" value="UniProtKB-KW"/>
</dbReference>
<dbReference type="GO" id="GO:0004639">
    <property type="term" value="F:phosphoribosylaminoimidazolesuccinocarboxamide synthase activity"/>
    <property type="evidence" value="ECO:0007669"/>
    <property type="project" value="UniProtKB-UniRule"/>
</dbReference>
<dbReference type="GO" id="GO:0006189">
    <property type="term" value="P:'de novo' IMP biosynthetic process"/>
    <property type="evidence" value="ECO:0007669"/>
    <property type="project" value="UniProtKB-UniRule"/>
</dbReference>
<dbReference type="GO" id="GO:0009236">
    <property type="term" value="P:cobalamin biosynthetic process"/>
    <property type="evidence" value="ECO:0007669"/>
    <property type="project" value="InterPro"/>
</dbReference>
<dbReference type="CDD" id="cd01415">
    <property type="entry name" value="SAICAR_synt_PurC"/>
    <property type="match status" value="1"/>
</dbReference>
<dbReference type="FunFam" id="3.30.470.20:FF:000006">
    <property type="entry name" value="Phosphoribosylaminoimidazole-succinocarboxamide synthase"/>
    <property type="match status" value="1"/>
</dbReference>
<dbReference type="Gene3D" id="3.30.470.20">
    <property type="entry name" value="ATP-grasp fold, B domain"/>
    <property type="match status" value="1"/>
</dbReference>
<dbReference type="Gene3D" id="3.30.200.20">
    <property type="entry name" value="Phosphorylase Kinase, domain 1"/>
    <property type="match status" value="1"/>
</dbReference>
<dbReference type="HAMAP" id="MF_00137">
    <property type="entry name" value="SAICAR_synth"/>
    <property type="match status" value="1"/>
</dbReference>
<dbReference type="InterPro" id="IPR028923">
    <property type="entry name" value="SAICAR_synt/ADE2_N"/>
</dbReference>
<dbReference type="InterPro" id="IPR033934">
    <property type="entry name" value="SAICAR_synt_PurC"/>
</dbReference>
<dbReference type="InterPro" id="IPR001636">
    <property type="entry name" value="SAICAR_synth"/>
</dbReference>
<dbReference type="InterPro" id="IPR050089">
    <property type="entry name" value="SAICAR_synthetase"/>
</dbReference>
<dbReference type="NCBIfam" id="TIGR00081">
    <property type="entry name" value="purC"/>
    <property type="match status" value="1"/>
</dbReference>
<dbReference type="PANTHER" id="PTHR43599">
    <property type="entry name" value="MULTIFUNCTIONAL PROTEIN ADE2"/>
    <property type="match status" value="1"/>
</dbReference>
<dbReference type="PANTHER" id="PTHR43599:SF3">
    <property type="entry name" value="SI:DKEY-6E2.2"/>
    <property type="match status" value="1"/>
</dbReference>
<dbReference type="Pfam" id="PF01259">
    <property type="entry name" value="SAICAR_synt"/>
    <property type="match status" value="1"/>
</dbReference>
<dbReference type="SUPFAM" id="SSF56104">
    <property type="entry name" value="SAICAR synthase-like"/>
    <property type="match status" value="1"/>
</dbReference>
<protein>
    <recommendedName>
        <fullName evidence="1">Phosphoribosylaminoimidazole-succinocarboxamide synthase</fullName>
        <ecNumber evidence="1">6.3.2.6</ecNumber>
    </recommendedName>
    <alternativeName>
        <fullName evidence="1">SAICAR synthetase</fullName>
    </alternativeName>
</protein>
<comment type="catalytic activity">
    <reaction evidence="1">
        <text>5-amino-1-(5-phospho-D-ribosyl)imidazole-4-carboxylate + L-aspartate + ATP = (2S)-2-[5-amino-1-(5-phospho-beta-D-ribosyl)imidazole-4-carboxamido]succinate + ADP + phosphate + 2 H(+)</text>
        <dbReference type="Rhea" id="RHEA:22628"/>
        <dbReference type="ChEBI" id="CHEBI:15378"/>
        <dbReference type="ChEBI" id="CHEBI:29991"/>
        <dbReference type="ChEBI" id="CHEBI:30616"/>
        <dbReference type="ChEBI" id="CHEBI:43474"/>
        <dbReference type="ChEBI" id="CHEBI:58443"/>
        <dbReference type="ChEBI" id="CHEBI:77657"/>
        <dbReference type="ChEBI" id="CHEBI:456216"/>
        <dbReference type="EC" id="6.3.2.6"/>
    </reaction>
</comment>
<comment type="pathway">
    <text evidence="1">Purine metabolism; IMP biosynthesis via de novo pathway; 5-amino-1-(5-phospho-D-ribosyl)imidazole-4-carboxamide from 5-amino-1-(5-phospho-D-ribosyl)imidazole-4-carboxylate: step 1/2.</text>
</comment>
<comment type="similarity">
    <text evidence="1">Belongs to the SAICAR synthetase family.</text>
</comment>
<sequence length="250" mass="28272">MEKLEKLYEGKAKQLYATDDPEVLWVEYKNSATAGDGEKKEDFAGKGRLNNLITTLIFDLLKKRGIDSHLVARVGETSQLVKKVTMFPLEIVLRNTAAGHFCSRLGVEEGIELKEPVLEYFLKNDELHDPFVNDDDLVALDVCTREDLAEIAPLARRINEALIEIFAKIDVKLVDFKIEMGRTSDGTLLLADEITPDSCRLWDQRDHSGKVEHLDKDLFRRDLGDIIPAYEEIESRLAELAKSEGIEVAE</sequence>
<reference key="1">
    <citation type="submission" date="2006-12" db="EMBL/GenBank/DDBJ databases">
        <title>Bifidobacterium adolescentis complete genome sequence.</title>
        <authorList>
            <person name="Suzuki T."/>
            <person name="Tsuda Y."/>
            <person name="Kanou N."/>
            <person name="Inoue T."/>
            <person name="Kumazaki K."/>
            <person name="Nagano S."/>
            <person name="Hirai S."/>
            <person name="Tanaka K."/>
            <person name="Watanabe K."/>
        </authorList>
    </citation>
    <scope>NUCLEOTIDE SEQUENCE [LARGE SCALE GENOMIC DNA]</scope>
    <source>
        <strain>ATCC 15703 / DSM 20083 / NCTC 11814 / E194a</strain>
    </source>
</reference>
<organism>
    <name type="scientific">Bifidobacterium adolescentis (strain ATCC 15703 / DSM 20083 / NCTC 11814 / E194a)</name>
    <dbReference type="NCBI Taxonomy" id="367928"/>
    <lineage>
        <taxon>Bacteria</taxon>
        <taxon>Bacillati</taxon>
        <taxon>Actinomycetota</taxon>
        <taxon>Actinomycetes</taxon>
        <taxon>Bifidobacteriales</taxon>
        <taxon>Bifidobacteriaceae</taxon>
        <taxon>Bifidobacterium</taxon>
    </lineage>
</organism>
<proteinExistence type="inferred from homology"/>
<keyword id="KW-0067">ATP-binding</keyword>
<keyword id="KW-0436">Ligase</keyword>
<keyword id="KW-0547">Nucleotide-binding</keyword>
<keyword id="KW-0658">Purine biosynthesis</keyword>
<keyword id="KW-1185">Reference proteome</keyword>
<evidence type="ECO:0000255" key="1">
    <source>
        <dbReference type="HAMAP-Rule" id="MF_00137"/>
    </source>
</evidence>
<name>PUR7_BIFAA</name>
<accession>A1A0S2</accession>